<reference key="1">
    <citation type="journal article" date="2007" name="Science">
        <title>Legumes symbioses: absence of nod genes in photosynthetic bradyrhizobia.</title>
        <authorList>
            <person name="Giraud E."/>
            <person name="Moulin L."/>
            <person name="Vallenet D."/>
            <person name="Barbe V."/>
            <person name="Cytryn E."/>
            <person name="Avarre J.-C."/>
            <person name="Jaubert M."/>
            <person name="Simon D."/>
            <person name="Cartieaux F."/>
            <person name="Prin Y."/>
            <person name="Bena G."/>
            <person name="Hannibal L."/>
            <person name="Fardoux J."/>
            <person name="Kojadinovic M."/>
            <person name="Vuillet L."/>
            <person name="Lajus A."/>
            <person name="Cruveiller S."/>
            <person name="Rouy Z."/>
            <person name="Mangenot S."/>
            <person name="Segurens B."/>
            <person name="Dossat C."/>
            <person name="Franck W.L."/>
            <person name="Chang W.-S."/>
            <person name="Saunders E."/>
            <person name="Bruce D."/>
            <person name="Richardson P."/>
            <person name="Normand P."/>
            <person name="Dreyfus B."/>
            <person name="Pignol D."/>
            <person name="Stacey G."/>
            <person name="Emerich D."/>
            <person name="Vermeglio A."/>
            <person name="Medigue C."/>
            <person name="Sadowsky M."/>
        </authorList>
    </citation>
    <scope>NUCLEOTIDE SEQUENCE [LARGE SCALE GENOMIC DNA]</scope>
    <source>
        <strain>ORS 278</strain>
    </source>
</reference>
<evidence type="ECO:0000255" key="1">
    <source>
        <dbReference type="HAMAP-Rule" id="MF_01013"/>
    </source>
</evidence>
<organism>
    <name type="scientific">Bradyrhizobium sp. (strain ORS 278)</name>
    <dbReference type="NCBI Taxonomy" id="114615"/>
    <lineage>
        <taxon>Bacteria</taxon>
        <taxon>Pseudomonadati</taxon>
        <taxon>Pseudomonadota</taxon>
        <taxon>Alphaproteobacteria</taxon>
        <taxon>Hyphomicrobiales</taxon>
        <taxon>Nitrobacteraceae</taxon>
        <taxon>Bradyrhizobium</taxon>
    </lineage>
</organism>
<dbReference type="EC" id="4.3.2.10" evidence="1"/>
<dbReference type="EMBL" id="CU234118">
    <property type="protein sequence ID" value="CAL74181.1"/>
    <property type="molecule type" value="Genomic_DNA"/>
</dbReference>
<dbReference type="RefSeq" id="WP_011923469.1">
    <property type="nucleotide sequence ID" value="NC_009445.1"/>
</dbReference>
<dbReference type="SMR" id="A4YJV5"/>
<dbReference type="STRING" id="114615.BRADO0216"/>
<dbReference type="KEGG" id="bra:BRADO0216"/>
<dbReference type="eggNOG" id="COG0107">
    <property type="taxonomic scope" value="Bacteria"/>
</dbReference>
<dbReference type="HOGENOM" id="CLU_048577_4_0_5"/>
<dbReference type="OrthoDB" id="9781903at2"/>
<dbReference type="UniPathway" id="UPA00031">
    <property type="reaction ID" value="UER00010"/>
</dbReference>
<dbReference type="Proteomes" id="UP000001994">
    <property type="component" value="Chromosome"/>
</dbReference>
<dbReference type="GO" id="GO:0005737">
    <property type="term" value="C:cytoplasm"/>
    <property type="evidence" value="ECO:0007669"/>
    <property type="project" value="UniProtKB-SubCell"/>
</dbReference>
<dbReference type="GO" id="GO:0000107">
    <property type="term" value="F:imidazoleglycerol-phosphate synthase activity"/>
    <property type="evidence" value="ECO:0007669"/>
    <property type="project" value="UniProtKB-UniRule"/>
</dbReference>
<dbReference type="GO" id="GO:0016829">
    <property type="term" value="F:lyase activity"/>
    <property type="evidence" value="ECO:0007669"/>
    <property type="project" value="UniProtKB-KW"/>
</dbReference>
<dbReference type="GO" id="GO:0000105">
    <property type="term" value="P:L-histidine biosynthetic process"/>
    <property type="evidence" value="ECO:0007669"/>
    <property type="project" value="UniProtKB-UniRule"/>
</dbReference>
<dbReference type="CDD" id="cd04731">
    <property type="entry name" value="HisF"/>
    <property type="match status" value="1"/>
</dbReference>
<dbReference type="FunFam" id="3.20.20.70:FF:000006">
    <property type="entry name" value="Imidazole glycerol phosphate synthase subunit HisF"/>
    <property type="match status" value="1"/>
</dbReference>
<dbReference type="Gene3D" id="3.20.20.70">
    <property type="entry name" value="Aldolase class I"/>
    <property type="match status" value="1"/>
</dbReference>
<dbReference type="HAMAP" id="MF_01013">
    <property type="entry name" value="HisF"/>
    <property type="match status" value="1"/>
</dbReference>
<dbReference type="InterPro" id="IPR013785">
    <property type="entry name" value="Aldolase_TIM"/>
</dbReference>
<dbReference type="InterPro" id="IPR006062">
    <property type="entry name" value="His_biosynth"/>
</dbReference>
<dbReference type="InterPro" id="IPR004651">
    <property type="entry name" value="HisF"/>
</dbReference>
<dbReference type="InterPro" id="IPR050064">
    <property type="entry name" value="IGPS_HisA/HisF"/>
</dbReference>
<dbReference type="InterPro" id="IPR011060">
    <property type="entry name" value="RibuloseP-bd_barrel"/>
</dbReference>
<dbReference type="NCBIfam" id="TIGR00735">
    <property type="entry name" value="hisF"/>
    <property type="match status" value="1"/>
</dbReference>
<dbReference type="PANTHER" id="PTHR21235:SF2">
    <property type="entry name" value="IMIDAZOLE GLYCEROL PHOSPHATE SYNTHASE HISHF"/>
    <property type="match status" value="1"/>
</dbReference>
<dbReference type="PANTHER" id="PTHR21235">
    <property type="entry name" value="IMIDAZOLE GLYCEROL PHOSPHATE SYNTHASE SUBUNIT HISF/H IGP SYNTHASE SUBUNIT HISF/H"/>
    <property type="match status" value="1"/>
</dbReference>
<dbReference type="Pfam" id="PF00977">
    <property type="entry name" value="His_biosynth"/>
    <property type="match status" value="1"/>
</dbReference>
<dbReference type="SUPFAM" id="SSF51366">
    <property type="entry name" value="Ribulose-phoshate binding barrel"/>
    <property type="match status" value="1"/>
</dbReference>
<proteinExistence type="inferred from homology"/>
<feature type="chain" id="PRO_1000063032" description="Imidazole glycerol phosphate synthase subunit HisF">
    <location>
        <begin position="1"/>
        <end position="258"/>
    </location>
</feature>
<feature type="active site" evidence="1">
    <location>
        <position position="11"/>
    </location>
</feature>
<feature type="active site" evidence="1">
    <location>
        <position position="130"/>
    </location>
</feature>
<sequence length="258" mass="27585">MFKVRVIPCLDVKDGRVVKGVNFVNLRDAGDPVEAAIAYDAAGADELCFLDITATHENRGIMLDVVRRTAEACFMPVTVGGGVRTIDDIKTLLRSGADKVSINSAAVSRREFVKEAAEKFGEQCIVVAIDAKSVPRPGGGSRWEIFTHGGRKSTGIDAIEYAQEVVALGAGEILLTSMDRDGTRQGFDLPLTRAVADSVPVPVIASGGVGNLDHLVDGIQQGRATAVLAASIFHFGEFTIRQAKEHMVRQGLPMRLDP</sequence>
<accession>A4YJV5</accession>
<protein>
    <recommendedName>
        <fullName evidence="1">Imidazole glycerol phosphate synthase subunit HisF</fullName>
        <ecNumber evidence="1">4.3.2.10</ecNumber>
    </recommendedName>
    <alternativeName>
        <fullName evidence="1">IGP synthase cyclase subunit</fullName>
    </alternativeName>
    <alternativeName>
        <fullName evidence="1">IGP synthase subunit HisF</fullName>
    </alternativeName>
    <alternativeName>
        <fullName evidence="1">ImGP synthase subunit HisF</fullName>
        <shortName evidence="1">IGPS subunit HisF</shortName>
    </alternativeName>
</protein>
<gene>
    <name evidence="1" type="primary">hisF</name>
    <name type="ordered locus">BRADO0216</name>
</gene>
<keyword id="KW-0028">Amino-acid biosynthesis</keyword>
<keyword id="KW-0963">Cytoplasm</keyword>
<keyword id="KW-0368">Histidine biosynthesis</keyword>
<keyword id="KW-0456">Lyase</keyword>
<keyword id="KW-1185">Reference proteome</keyword>
<comment type="function">
    <text evidence="1">IGPS catalyzes the conversion of PRFAR and glutamine to IGP, AICAR and glutamate. The HisF subunit catalyzes the cyclization activity that produces IGP and AICAR from PRFAR using the ammonia provided by the HisH subunit.</text>
</comment>
<comment type="catalytic activity">
    <reaction evidence="1">
        <text>5-[(5-phospho-1-deoxy-D-ribulos-1-ylimino)methylamino]-1-(5-phospho-beta-D-ribosyl)imidazole-4-carboxamide + L-glutamine = D-erythro-1-(imidazol-4-yl)glycerol 3-phosphate + 5-amino-1-(5-phospho-beta-D-ribosyl)imidazole-4-carboxamide + L-glutamate + H(+)</text>
        <dbReference type="Rhea" id="RHEA:24793"/>
        <dbReference type="ChEBI" id="CHEBI:15378"/>
        <dbReference type="ChEBI" id="CHEBI:29985"/>
        <dbReference type="ChEBI" id="CHEBI:58278"/>
        <dbReference type="ChEBI" id="CHEBI:58359"/>
        <dbReference type="ChEBI" id="CHEBI:58475"/>
        <dbReference type="ChEBI" id="CHEBI:58525"/>
        <dbReference type="EC" id="4.3.2.10"/>
    </reaction>
</comment>
<comment type="pathway">
    <text evidence="1">Amino-acid biosynthesis; L-histidine biosynthesis; L-histidine from 5-phospho-alpha-D-ribose 1-diphosphate: step 5/9.</text>
</comment>
<comment type="subunit">
    <text evidence="1">Heterodimer of HisH and HisF.</text>
</comment>
<comment type="subcellular location">
    <subcellularLocation>
        <location evidence="1">Cytoplasm</location>
    </subcellularLocation>
</comment>
<comment type="similarity">
    <text evidence="1">Belongs to the HisA/HisF family.</text>
</comment>
<name>HIS6_BRASO</name>